<keyword id="KW-1185">Reference proteome</keyword>
<comment type="caution">
    <text evidence="1">Could be the product of a pseudogene.</text>
</comment>
<comment type="sequence caution" evidence="1">
    <conflict type="erroneous termination">
        <sequence resource="EMBL-CDS" id="AAG57764"/>
    </conflict>
    <text>Truncated C-terminus.</text>
</comment>
<comment type="sequence caution" evidence="1">
    <conflict type="erroneous termination">
        <sequence resource="EMBL-CDS" id="AAG57765"/>
    </conflict>
    <text>Truncated C-terminus.</text>
</comment>
<comment type="sequence caution" evidence="1">
    <conflict type="erroneous termination">
        <sequence resource="EMBL-CDS" id="BAB36941"/>
    </conflict>
    <text>Truncated C-terminus.</text>
</comment>
<comment type="sequence caution" evidence="1">
    <conflict type="erroneous termination">
        <sequence resource="EMBL-CDS" id="BAB36942"/>
    </conflict>
    <text>Truncated C-terminus.</text>
</comment>
<gene>
    <name type="primary">ygaQ</name>
    <name type="ordered locus">Z3954/Z3955</name>
    <name type="ordered locus">ECs3518/ECs3519</name>
</gene>
<protein>
    <recommendedName>
        <fullName>Putative uncharacterized protein YgaQ</fullName>
    </recommendedName>
</protein>
<evidence type="ECO:0000305" key="1"/>
<reference key="1">
    <citation type="journal article" date="2001" name="Nature">
        <title>Genome sequence of enterohaemorrhagic Escherichia coli O157:H7.</title>
        <authorList>
            <person name="Perna N.T."/>
            <person name="Plunkett G. III"/>
            <person name="Burland V."/>
            <person name="Mau B."/>
            <person name="Glasner J.D."/>
            <person name="Rose D.J."/>
            <person name="Mayhew G.F."/>
            <person name="Evans P.S."/>
            <person name="Gregor J."/>
            <person name="Kirkpatrick H.A."/>
            <person name="Posfai G."/>
            <person name="Hackett J."/>
            <person name="Klink S."/>
            <person name="Boutin A."/>
            <person name="Shao Y."/>
            <person name="Miller L."/>
            <person name="Grotbeck E.J."/>
            <person name="Davis N.W."/>
            <person name="Lim A."/>
            <person name="Dimalanta E.T."/>
            <person name="Potamousis K."/>
            <person name="Apodaca J."/>
            <person name="Anantharaman T.S."/>
            <person name="Lin J."/>
            <person name="Yen G."/>
            <person name="Schwartz D.C."/>
            <person name="Welch R.A."/>
            <person name="Blattner F.R."/>
        </authorList>
    </citation>
    <scope>NUCLEOTIDE SEQUENCE [LARGE SCALE GENOMIC DNA]</scope>
    <source>
        <strain>O157:H7 / EDL933 / ATCC 700927 / EHEC</strain>
    </source>
</reference>
<reference key="2">
    <citation type="journal article" date="2001" name="DNA Res.">
        <title>Complete genome sequence of enterohemorrhagic Escherichia coli O157:H7 and genomic comparison with a laboratory strain K-12.</title>
        <authorList>
            <person name="Hayashi T."/>
            <person name="Makino K."/>
            <person name="Ohnishi M."/>
            <person name="Kurokawa K."/>
            <person name="Ishii K."/>
            <person name="Yokoyama K."/>
            <person name="Han C.-G."/>
            <person name="Ohtsubo E."/>
            <person name="Nakayama K."/>
            <person name="Murata T."/>
            <person name="Tanaka M."/>
            <person name="Tobe T."/>
            <person name="Iida T."/>
            <person name="Takami H."/>
            <person name="Honda T."/>
            <person name="Sasakawa C."/>
            <person name="Ogasawara N."/>
            <person name="Yasunaga T."/>
            <person name="Kuhara S."/>
            <person name="Shiba T."/>
            <person name="Hattori M."/>
            <person name="Shinagawa H."/>
        </authorList>
    </citation>
    <scope>NUCLEOTIDE SEQUENCE [LARGE SCALE GENOMIC DNA]</scope>
    <source>
        <strain>O157:H7 / Sakai / RIMD 0509952 / EHEC</strain>
    </source>
</reference>
<proteinExistence type="uncertain"/>
<accession>Q8X958</accession>
<accession>Q7ABF1</accession>
<accession>Q7ABF2</accession>
<accession>Q8X956</accession>
<organism>
    <name type="scientific">Escherichia coli O157:H7</name>
    <dbReference type="NCBI Taxonomy" id="83334"/>
    <lineage>
        <taxon>Bacteria</taxon>
        <taxon>Pseudomonadati</taxon>
        <taxon>Pseudomonadota</taxon>
        <taxon>Gammaproteobacteria</taxon>
        <taxon>Enterobacterales</taxon>
        <taxon>Enterobacteriaceae</taxon>
        <taxon>Escherichia</taxon>
    </lineage>
</organism>
<feature type="chain" id="PRO_0000268607" description="Putative uncharacterized protein YgaQ">
    <location>
        <begin position="1"/>
        <end position="750"/>
    </location>
</feature>
<sequence>MFSIKPGPRKLPIDNPSLLSWNITDGDLNSKLNTLEYLNCVTNIINACGVYPQDLKDREIISTFHAEKVINDLLKNDYKISLSPDTTYRELNKAAQRSITAPDRIGEGKIWVYQRDTMVERGDNSGVHQYGPAEHFTHIISDKPSPKDKYVAYAINIPDYELAADVYNINVTSPSGQQETFKILINPEHLRQTLERKSLTAVQKSQCEIITPKKPGEAILHAFNATYQQIRENMSEFARCHYGYIQIPPVTTFRADGPETPEEEKGYWFHAYQPEDLCTIHNPMGDLQDFIALVKDAKKFGIDIIPDYTFNFMGIGGSGKNDLDYPSADIRAKISKDIEGGIPGYWQGQVLIPFTIDPVTKERKQIHPEDIHLTAKDFEASKDNISKDEWENLHALKEKRLNGMPKTPPKSDQVIMLQNQYVREMRKYGVRGLRYDAAKHSKHEQIERSITPPLKNYNERLHNTNLFNPKYHEKAVMNYMEYLVTCQLDEEQMSSLLYERDDLSAIDFSLLMKTIKAFSFGGDLQTLASKPSSTISSIPSKRRILININHDFPNNGNLFNDFLFNHQQDEQLAMAYMAALPFSRPLVYWDGQVLKSTTEIKNYDGSTRVGGEAWLNKGCSTYQQLYNEFHALYIDKAGIWSAFEGVFATKNVLAFSRGDSVNINHSPHDGLVIINKGNEEVEGAWPNKLQPGKYKNMGSNSVNIIINNTRKIIPPGKAFMLRGGTLNINIPGRSALLLGKTGEPLNYLYL</sequence>
<name>YGAQ_ECO57</name>
<dbReference type="EMBL" id="AE005174">
    <property type="protein sequence ID" value="AAG57764.1"/>
    <property type="status" value="ALT_SEQ"/>
    <property type="molecule type" value="Genomic_DNA"/>
</dbReference>
<dbReference type="EMBL" id="AE005174">
    <property type="protein sequence ID" value="AAG57765.1"/>
    <property type="status" value="ALT_SEQ"/>
    <property type="molecule type" value="Genomic_DNA"/>
</dbReference>
<dbReference type="EMBL" id="BA000007">
    <property type="protein sequence ID" value="BAB36941.1"/>
    <property type="status" value="ALT_SEQ"/>
    <property type="molecule type" value="Genomic_DNA"/>
</dbReference>
<dbReference type="EMBL" id="BA000007">
    <property type="protein sequence ID" value="BAB36942.1"/>
    <property type="status" value="ALT_SEQ"/>
    <property type="molecule type" value="Genomic_DNA"/>
</dbReference>
<dbReference type="PIR" id="A85913">
    <property type="entry name" value="A85913"/>
</dbReference>
<dbReference type="PIR" id="F91068">
    <property type="entry name" value="F91068"/>
</dbReference>
<dbReference type="PIR" id="G91068">
    <property type="entry name" value="G91068"/>
</dbReference>
<dbReference type="PIR" id="H85912">
    <property type="entry name" value="H85912"/>
</dbReference>
<dbReference type="RefSeq" id="NP_311546.1">
    <property type="nucleotide sequence ID" value="NC_002695.1"/>
</dbReference>
<dbReference type="SMR" id="Q8X958"/>
<dbReference type="STRING" id="155864.Z3954"/>
<dbReference type="DNASU" id="914765"/>
<dbReference type="KEGG" id="ece:Z3954"/>
<dbReference type="KEGG" id="ece:Z3955"/>
<dbReference type="KEGG" id="ecs:ECs_3518"/>
<dbReference type="KEGG" id="ecs:ECs_3519"/>
<dbReference type="PATRIC" id="fig|386585.9.peg.3672"/>
<dbReference type="HOGENOM" id="CLU_055412_0_0_6"/>
<dbReference type="Proteomes" id="UP000000558">
    <property type="component" value="Chromosome"/>
</dbReference>
<dbReference type="Proteomes" id="UP000002519">
    <property type="component" value="Chromosome"/>
</dbReference>
<dbReference type="GO" id="GO:0003824">
    <property type="term" value="F:catalytic activity"/>
    <property type="evidence" value="ECO:0007669"/>
    <property type="project" value="InterPro"/>
</dbReference>
<dbReference type="GO" id="GO:0043169">
    <property type="term" value="F:cation binding"/>
    <property type="evidence" value="ECO:0007669"/>
    <property type="project" value="InterPro"/>
</dbReference>
<dbReference type="GO" id="GO:0005975">
    <property type="term" value="P:carbohydrate metabolic process"/>
    <property type="evidence" value="ECO:0007669"/>
    <property type="project" value="InterPro"/>
</dbReference>
<dbReference type="Gene3D" id="3.20.20.80">
    <property type="entry name" value="Glycosidases"/>
    <property type="match status" value="1"/>
</dbReference>
<dbReference type="Gene3D" id="2.60.40.1180">
    <property type="entry name" value="Golgi alpha-mannosidase II"/>
    <property type="match status" value="1"/>
</dbReference>
<dbReference type="InterPro" id="IPR006048">
    <property type="entry name" value="A-amylase/branching_C"/>
</dbReference>
<dbReference type="InterPro" id="IPR006047">
    <property type="entry name" value="Glyco_hydro_13_cat_dom"/>
</dbReference>
<dbReference type="InterPro" id="IPR013780">
    <property type="entry name" value="Glyco_hydro_b"/>
</dbReference>
<dbReference type="InterPro" id="IPR017853">
    <property type="entry name" value="Glycoside_hydrolase_SF"/>
</dbReference>
<dbReference type="PANTHER" id="PTHR43447">
    <property type="entry name" value="ALPHA-AMYLASE"/>
    <property type="match status" value="1"/>
</dbReference>
<dbReference type="Pfam" id="PF02806">
    <property type="entry name" value="Alpha-amylase_C"/>
    <property type="match status" value="1"/>
</dbReference>
<dbReference type="SMART" id="SM00642">
    <property type="entry name" value="Aamy"/>
    <property type="match status" value="1"/>
</dbReference>
<dbReference type="SUPFAM" id="SSF51445">
    <property type="entry name" value="(Trans)glycosidases"/>
    <property type="match status" value="1"/>
</dbReference>
<dbReference type="SUPFAM" id="SSF51011">
    <property type="entry name" value="Glycosyl hydrolase domain"/>
    <property type="match status" value="1"/>
</dbReference>